<gene>
    <name evidence="1" type="primary">SLX4</name>
    <name type="ordered locus">KLLA0D16544g</name>
</gene>
<feature type="chain" id="PRO_0000388029" description="Structure-specific endonuclease subunit SLX4">
    <location>
        <begin position="1"/>
        <end position="692"/>
    </location>
</feature>
<feature type="region of interest" description="Disordered" evidence="2">
    <location>
        <begin position="39"/>
        <end position="59"/>
    </location>
</feature>
<name>SLX4_KLULA</name>
<comment type="function">
    <text evidence="1">Regulatory subunit of the SLX1-SLX4 structure-specific endonuclease that resolves DNA secondary structures generated during DNA repair and recombination. Has endonuclease activity towards branched DNA substrates, introducing single-strand cuts in duplex DNA close to junctions with ss-DNA.</text>
</comment>
<comment type="subunit">
    <text evidence="1">Forms a heterodimer with SLX1.</text>
</comment>
<comment type="subcellular location">
    <subcellularLocation>
        <location evidence="1">Nucleus</location>
    </subcellularLocation>
</comment>
<comment type="PTM">
    <text evidence="1">Phosphorylated in response to DNA damage.</text>
</comment>
<comment type="similarity">
    <text evidence="1">Belongs to the SLX4 family.</text>
</comment>
<dbReference type="EMBL" id="CR382124">
    <property type="protein sequence ID" value="CAH00886.1"/>
    <property type="molecule type" value="Genomic_DNA"/>
</dbReference>
<dbReference type="RefSeq" id="XP_453790.1">
    <property type="nucleotide sequence ID" value="XM_453790.1"/>
</dbReference>
<dbReference type="SMR" id="Q6CQJ9"/>
<dbReference type="FunCoup" id="Q6CQJ9">
    <property type="interactions" value="49"/>
</dbReference>
<dbReference type="STRING" id="284590.Q6CQJ9"/>
<dbReference type="PaxDb" id="284590-Q6CQJ9"/>
<dbReference type="KEGG" id="kla:KLLA0_D16544g"/>
<dbReference type="eggNOG" id="ENOG502RYEW">
    <property type="taxonomic scope" value="Eukaryota"/>
</dbReference>
<dbReference type="HOGENOM" id="CLU_022388_0_0_1"/>
<dbReference type="InParanoid" id="Q6CQJ9"/>
<dbReference type="OMA" id="FMNTQIQ"/>
<dbReference type="Proteomes" id="UP000000598">
    <property type="component" value="Chromosome D"/>
</dbReference>
<dbReference type="GO" id="GO:0033557">
    <property type="term" value="C:Slx1-Slx4 complex"/>
    <property type="evidence" value="ECO:0007669"/>
    <property type="project" value="UniProtKB-UniRule"/>
</dbReference>
<dbReference type="GO" id="GO:0017108">
    <property type="term" value="F:5'-flap endonuclease activity"/>
    <property type="evidence" value="ECO:0007669"/>
    <property type="project" value="InterPro"/>
</dbReference>
<dbReference type="GO" id="GO:0006310">
    <property type="term" value="P:DNA recombination"/>
    <property type="evidence" value="ECO:0007669"/>
    <property type="project" value="UniProtKB-UniRule"/>
</dbReference>
<dbReference type="GO" id="GO:0006281">
    <property type="term" value="P:DNA repair"/>
    <property type="evidence" value="ECO:0007669"/>
    <property type="project" value="UniProtKB-UniRule"/>
</dbReference>
<dbReference type="GO" id="GO:0006260">
    <property type="term" value="P:DNA replication"/>
    <property type="evidence" value="ECO:0007669"/>
    <property type="project" value="InterPro"/>
</dbReference>
<dbReference type="HAMAP" id="MF_03110">
    <property type="entry name" value="Endonuc_su_Slx4"/>
    <property type="match status" value="1"/>
</dbReference>
<dbReference type="InterPro" id="IPR027784">
    <property type="entry name" value="Slx4_ascomycetes"/>
</dbReference>
<dbReference type="InterPro" id="IPR018574">
    <property type="entry name" value="Structure-sp_endonuc_su_Slx4"/>
</dbReference>
<dbReference type="Pfam" id="PF09494">
    <property type="entry name" value="Slx4"/>
    <property type="match status" value="1"/>
</dbReference>
<protein>
    <recommendedName>
        <fullName evidence="1">Structure-specific endonuclease subunit SLX4</fullName>
    </recommendedName>
</protein>
<proteinExistence type="inferred from homology"/>
<organism>
    <name type="scientific">Kluyveromyces lactis (strain ATCC 8585 / CBS 2359 / DSM 70799 / NBRC 1267 / NRRL Y-1140 / WM37)</name>
    <name type="common">Yeast</name>
    <name type="synonym">Candida sphaerica</name>
    <dbReference type="NCBI Taxonomy" id="284590"/>
    <lineage>
        <taxon>Eukaryota</taxon>
        <taxon>Fungi</taxon>
        <taxon>Dikarya</taxon>
        <taxon>Ascomycota</taxon>
        <taxon>Saccharomycotina</taxon>
        <taxon>Saccharomycetes</taxon>
        <taxon>Saccharomycetales</taxon>
        <taxon>Saccharomycetaceae</taxon>
        <taxon>Kluyveromyces</taxon>
    </lineage>
</organism>
<accession>Q6CQJ9</accession>
<evidence type="ECO:0000255" key="1">
    <source>
        <dbReference type="HAMAP-Rule" id="MF_03110"/>
    </source>
</evidence>
<evidence type="ECO:0000256" key="2">
    <source>
        <dbReference type="SAM" id="MobiDB-lite"/>
    </source>
</evidence>
<keyword id="KW-0227">DNA damage</keyword>
<keyword id="KW-0233">DNA recombination</keyword>
<keyword id="KW-0234">DNA repair</keyword>
<keyword id="KW-0539">Nucleus</keyword>
<keyword id="KW-0597">Phosphoprotein</keyword>
<keyword id="KW-1185">Reference proteome</keyword>
<reference key="1">
    <citation type="journal article" date="2004" name="Nature">
        <title>Genome evolution in yeasts.</title>
        <authorList>
            <person name="Dujon B."/>
            <person name="Sherman D."/>
            <person name="Fischer G."/>
            <person name="Durrens P."/>
            <person name="Casaregola S."/>
            <person name="Lafontaine I."/>
            <person name="de Montigny J."/>
            <person name="Marck C."/>
            <person name="Neuveglise C."/>
            <person name="Talla E."/>
            <person name="Goffard N."/>
            <person name="Frangeul L."/>
            <person name="Aigle M."/>
            <person name="Anthouard V."/>
            <person name="Babour A."/>
            <person name="Barbe V."/>
            <person name="Barnay S."/>
            <person name="Blanchin S."/>
            <person name="Beckerich J.-M."/>
            <person name="Beyne E."/>
            <person name="Bleykasten C."/>
            <person name="Boisrame A."/>
            <person name="Boyer J."/>
            <person name="Cattolico L."/>
            <person name="Confanioleri F."/>
            <person name="de Daruvar A."/>
            <person name="Despons L."/>
            <person name="Fabre E."/>
            <person name="Fairhead C."/>
            <person name="Ferry-Dumazet H."/>
            <person name="Groppi A."/>
            <person name="Hantraye F."/>
            <person name="Hennequin C."/>
            <person name="Jauniaux N."/>
            <person name="Joyet P."/>
            <person name="Kachouri R."/>
            <person name="Kerrest A."/>
            <person name="Koszul R."/>
            <person name="Lemaire M."/>
            <person name="Lesur I."/>
            <person name="Ma L."/>
            <person name="Muller H."/>
            <person name="Nicaud J.-M."/>
            <person name="Nikolski M."/>
            <person name="Oztas S."/>
            <person name="Ozier-Kalogeropoulos O."/>
            <person name="Pellenz S."/>
            <person name="Potier S."/>
            <person name="Richard G.-F."/>
            <person name="Straub M.-L."/>
            <person name="Suleau A."/>
            <person name="Swennen D."/>
            <person name="Tekaia F."/>
            <person name="Wesolowski-Louvel M."/>
            <person name="Westhof E."/>
            <person name="Wirth B."/>
            <person name="Zeniou-Meyer M."/>
            <person name="Zivanovic Y."/>
            <person name="Bolotin-Fukuhara M."/>
            <person name="Thierry A."/>
            <person name="Bouchier C."/>
            <person name="Caudron B."/>
            <person name="Scarpelli C."/>
            <person name="Gaillardin C."/>
            <person name="Weissenbach J."/>
            <person name="Wincker P."/>
            <person name="Souciet J.-L."/>
        </authorList>
    </citation>
    <scope>NUCLEOTIDE SEQUENCE [LARGE SCALE GENOMIC DNA]</scope>
    <source>
        <strain>ATCC 8585 / CBS 2359 / DSM 70799 / NBRC 1267 / NRRL Y-1140 / WM37</strain>
    </source>
</reference>
<sequence>MHDELEKAGRHLLMVNDHLSEDSVEQGDICMTQVPTMFSDDEDQDEEQETEIPPEEGDDDILISTQVQGAIDELNHQETVVHTFRNVLSRFALETQDQADIPLVSSKKVPVKKVIKSSKVKQPTARLQKRIKSITQFNTDNWESNRVKDRAQKMISILSGKSAKVKKLVSKLDSEASADAESLQDSHPTQFAPFNESEWQHIVGLLREKLPKVSRSELNSVQQYVYGADEQHNLWKASQLSPEKQISSQCSDGESETILPSLTLDNNAPVYTLSQLVEGESSNNRCSTEDGLRFKPISNPSSVIEQELPISIDVPSSETDVPSQIADSCDSGSIISFEELSFMIQDKNKADVDYDIPCYLPPDSKTLPTGEKTKREYSRANINDQLINISQTSYDVVSSIVSPMKAQRTGTIQVPATRTTTFQDQQQQNQQQASKPANVVKIYVDSNRDSNDVFASVKGEVDTQEQESLSTLTTSMLHDDNNEIVIDSEDERGSYSIMEVHDAPQTHLGQFPSLRKSQSQKLKTPVSATDSLDSQLQPALLTTQNASPNTAKLRRSFKVIGLKPCKNKVQMLQVWETLESKFPGSSDEDRSIQLKQFLTDLIVQNRDESALLMEQIYTFEPIRYEQLKEWLVSLNSFTELIDDSFIKNWADLNGIVFRNDTENPLLSQSQSQSQSRLLSQSLSQLQSPSLSP</sequence>